<accession>Q9JLY7</accession>
<accession>Q9D715</accession>
<keyword id="KW-0378">Hydrolase</keyword>
<keyword id="KW-0904">Protein phosphatase</keyword>
<keyword id="KW-1185">Reference proteome</keyword>
<evidence type="ECO:0000250" key="1">
    <source>
        <dbReference type="UniProtKB" id="O95147"/>
    </source>
</evidence>
<evidence type="ECO:0000255" key="2">
    <source>
        <dbReference type="PROSITE-ProRule" id="PRU00160"/>
    </source>
</evidence>
<evidence type="ECO:0000255" key="3">
    <source>
        <dbReference type="PROSITE-ProRule" id="PRU10044"/>
    </source>
</evidence>
<evidence type="ECO:0000305" key="4"/>
<protein>
    <recommendedName>
        <fullName>Dual specificity protein phosphatase 14</fullName>
        <ecNumber>3.1.3.16</ecNumber>
        <ecNumber>3.1.3.48</ecNumber>
    </recommendedName>
    <alternativeName>
        <fullName>Mitogen-activated protein kinase phosphatase 6</fullName>
        <shortName>MAP kinase phosphatase 6</shortName>
        <shortName>MKP-6</shortName>
    </alternativeName>
</protein>
<gene>
    <name type="primary">Dusp14</name>
    <name type="synonym">Mkp6</name>
</gene>
<organism>
    <name type="scientific">Mus musculus</name>
    <name type="common">Mouse</name>
    <dbReference type="NCBI Taxonomy" id="10090"/>
    <lineage>
        <taxon>Eukaryota</taxon>
        <taxon>Metazoa</taxon>
        <taxon>Chordata</taxon>
        <taxon>Craniata</taxon>
        <taxon>Vertebrata</taxon>
        <taxon>Euteleostomi</taxon>
        <taxon>Mammalia</taxon>
        <taxon>Eutheria</taxon>
        <taxon>Euarchontoglires</taxon>
        <taxon>Glires</taxon>
        <taxon>Rodentia</taxon>
        <taxon>Myomorpha</taxon>
        <taxon>Muroidea</taxon>
        <taxon>Muridae</taxon>
        <taxon>Murinae</taxon>
        <taxon>Mus</taxon>
        <taxon>Mus</taxon>
    </lineage>
</organism>
<reference key="1">
    <citation type="journal article" date="2001" name="J. Immunol.">
        <title>Negative-feedback regulation of CD28 costimulation by a novel mitogen-activated protein kinase phosphatase, MKP6.</title>
        <authorList>
            <person name="Marti F."/>
            <person name="Krause A."/>
            <person name="Post N.H."/>
            <person name="Lyddane C."/>
            <person name="Dupont B."/>
            <person name="Sadelain M."/>
            <person name="King P.D."/>
        </authorList>
    </citation>
    <scope>NUCLEOTIDE SEQUENCE [MRNA]</scope>
    <source>
        <strain>BALB/cJ</strain>
    </source>
</reference>
<reference key="2">
    <citation type="journal article" date="2005" name="Science">
        <title>The transcriptional landscape of the mammalian genome.</title>
        <authorList>
            <person name="Carninci P."/>
            <person name="Kasukawa T."/>
            <person name="Katayama S."/>
            <person name="Gough J."/>
            <person name="Frith M.C."/>
            <person name="Maeda N."/>
            <person name="Oyama R."/>
            <person name="Ravasi T."/>
            <person name="Lenhard B."/>
            <person name="Wells C."/>
            <person name="Kodzius R."/>
            <person name="Shimokawa K."/>
            <person name="Bajic V.B."/>
            <person name="Brenner S.E."/>
            <person name="Batalov S."/>
            <person name="Forrest A.R."/>
            <person name="Zavolan M."/>
            <person name="Davis M.J."/>
            <person name="Wilming L.G."/>
            <person name="Aidinis V."/>
            <person name="Allen J.E."/>
            <person name="Ambesi-Impiombato A."/>
            <person name="Apweiler R."/>
            <person name="Aturaliya R.N."/>
            <person name="Bailey T.L."/>
            <person name="Bansal M."/>
            <person name="Baxter L."/>
            <person name="Beisel K.W."/>
            <person name="Bersano T."/>
            <person name="Bono H."/>
            <person name="Chalk A.M."/>
            <person name="Chiu K.P."/>
            <person name="Choudhary V."/>
            <person name="Christoffels A."/>
            <person name="Clutterbuck D.R."/>
            <person name="Crowe M.L."/>
            <person name="Dalla E."/>
            <person name="Dalrymple B.P."/>
            <person name="de Bono B."/>
            <person name="Della Gatta G."/>
            <person name="di Bernardo D."/>
            <person name="Down T."/>
            <person name="Engstrom P."/>
            <person name="Fagiolini M."/>
            <person name="Faulkner G."/>
            <person name="Fletcher C.F."/>
            <person name="Fukushima T."/>
            <person name="Furuno M."/>
            <person name="Futaki S."/>
            <person name="Gariboldi M."/>
            <person name="Georgii-Hemming P."/>
            <person name="Gingeras T.R."/>
            <person name="Gojobori T."/>
            <person name="Green R.E."/>
            <person name="Gustincich S."/>
            <person name="Harbers M."/>
            <person name="Hayashi Y."/>
            <person name="Hensch T.K."/>
            <person name="Hirokawa N."/>
            <person name="Hill D."/>
            <person name="Huminiecki L."/>
            <person name="Iacono M."/>
            <person name="Ikeo K."/>
            <person name="Iwama A."/>
            <person name="Ishikawa T."/>
            <person name="Jakt M."/>
            <person name="Kanapin A."/>
            <person name="Katoh M."/>
            <person name="Kawasawa Y."/>
            <person name="Kelso J."/>
            <person name="Kitamura H."/>
            <person name="Kitano H."/>
            <person name="Kollias G."/>
            <person name="Krishnan S.P."/>
            <person name="Kruger A."/>
            <person name="Kummerfeld S.K."/>
            <person name="Kurochkin I.V."/>
            <person name="Lareau L.F."/>
            <person name="Lazarevic D."/>
            <person name="Lipovich L."/>
            <person name="Liu J."/>
            <person name="Liuni S."/>
            <person name="McWilliam S."/>
            <person name="Madan Babu M."/>
            <person name="Madera M."/>
            <person name="Marchionni L."/>
            <person name="Matsuda H."/>
            <person name="Matsuzawa S."/>
            <person name="Miki H."/>
            <person name="Mignone F."/>
            <person name="Miyake S."/>
            <person name="Morris K."/>
            <person name="Mottagui-Tabar S."/>
            <person name="Mulder N."/>
            <person name="Nakano N."/>
            <person name="Nakauchi H."/>
            <person name="Ng P."/>
            <person name="Nilsson R."/>
            <person name="Nishiguchi S."/>
            <person name="Nishikawa S."/>
            <person name="Nori F."/>
            <person name="Ohara O."/>
            <person name="Okazaki Y."/>
            <person name="Orlando V."/>
            <person name="Pang K.C."/>
            <person name="Pavan W.J."/>
            <person name="Pavesi G."/>
            <person name="Pesole G."/>
            <person name="Petrovsky N."/>
            <person name="Piazza S."/>
            <person name="Reed J."/>
            <person name="Reid J.F."/>
            <person name="Ring B.Z."/>
            <person name="Ringwald M."/>
            <person name="Rost B."/>
            <person name="Ruan Y."/>
            <person name="Salzberg S.L."/>
            <person name="Sandelin A."/>
            <person name="Schneider C."/>
            <person name="Schoenbach C."/>
            <person name="Sekiguchi K."/>
            <person name="Semple C.A."/>
            <person name="Seno S."/>
            <person name="Sessa L."/>
            <person name="Sheng Y."/>
            <person name="Shibata Y."/>
            <person name="Shimada H."/>
            <person name="Shimada K."/>
            <person name="Silva D."/>
            <person name="Sinclair B."/>
            <person name="Sperling S."/>
            <person name="Stupka E."/>
            <person name="Sugiura K."/>
            <person name="Sultana R."/>
            <person name="Takenaka Y."/>
            <person name="Taki K."/>
            <person name="Tammoja K."/>
            <person name="Tan S.L."/>
            <person name="Tang S."/>
            <person name="Taylor M.S."/>
            <person name="Tegner J."/>
            <person name="Teichmann S.A."/>
            <person name="Ueda H.R."/>
            <person name="van Nimwegen E."/>
            <person name="Verardo R."/>
            <person name="Wei C.L."/>
            <person name="Yagi K."/>
            <person name="Yamanishi H."/>
            <person name="Zabarovsky E."/>
            <person name="Zhu S."/>
            <person name="Zimmer A."/>
            <person name="Hide W."/>
            <person name="Bult C."/>
            <person name="Grimmond S.M."/>
            <person name="Teasdale R.D."/>
            <person name="Liu E.T."/>
            <person name="Brusic V."/>
            <person name="Quackenbush J."/>
            <person name="Wahlestedt C."/>
            <person name="Mattick J.S."/>
            <person name="Hume D.A."/>
            <person name="Kai C."/>
            <person name="Sasaki D."/>
            <person name="Tomaru Y."/>
            <person name="Fukuda S."/>
            <person name="Kanamori-Katayama M."/>
            <person name="Suzuki M."/>
            <person name="Aoki J."/>
            <person name="Arakawa T."/>
            <person name="Iida J."/>
            <person name="Imamura K."/>
            <person name="Itoh M."/>
            <person name="Kato T."/>
            <person name="Kawaji H."/>
            <person name="Kawagashira N."/>
            <person name="Kawashima T."/>
            <person name="Kojima M."/>
            <person name="Kondo S."/>
            <person name="Konno H."/>
            <person name="Nakano K."/>
            <person name="Ninomiya N."/>
            <person name="Nishio T."/>
            <person name="Okada M."/>
            <person name="Plessy C."/>
            <person name="Shibata K."/>
            <person name="Shiraki T."/>
            <person name="Suzuki S."/>
            <person name="Tagami M."/>
            <person name="Waki K."/>
            <person name="Watahiki A."/>
            <person name="Okamura-Oho Y."/>
            <person name="Suzuki H."/>
            <person name="Kawai J."/>
            <person name="Hayashizaki Y."/>
        </authorList>
    </citation>
    <scope>NUCLEOTIDE SEQUENCE [LARGE SCALE MRNA]</scope>
    <source>
        <strain>C57BL/6J</strain>
        <tissue>Tongue</tissue>
    </source>
</reference>
<reference key="3">
    <citation type="journal article" date="2004" name="Genome Res.">
        <title>The status, quality, and expansion of the NIH full-length cDNA project: the Mammalian Gene Collection (MGC).</title>
        <authorList>
            <consortium name="The MGC Project Team"/>
        </authorList>
    </citation>
    <scope>NUCLEOTIDE SEQUENCE [LARGE SCALE MRNA]</scope>
</reference>
<feature type="chain" id="PRO_0000094823" description="Dual specificity protein phosphatase 14">
    <location>
        <begin position="1"/>
        <end position="198"/>
    </location>
</feature>
<feature type="domain" description="Tyrosine-protein phosphatase" evidence="2">
    <location>
        <begin position="26"/>
        <end position="167"/>
    </location>
</feature>
<feature type="active site" description="Phosphocysteine intermediate" evidence="2">
    <location>
        <position position="111"/>
    </location>
</feature>
<feature type="sequence conflict" description="In Ref. 1; AAF28862." evidence="4" ref="1">
    <original>R</original>
    <variation>K</variation>
    <location>
        <position position="38"/>
    </location>
</feature>
<feature type="sequence conflict" description="In Ref. 1; AAF28862." evidence="4" ref="1">
    <original>P</original>
    <variation>H</variation>
    <location>
        <position position="150"/>
    </location>
</feature>
<feature type="sequence conflict" description="In Ref. 1; AAF28862." evidence="4" ref="1">
    <original>D</original>
    <variation>E</variation>
    <location>
        <position position="160"/>
    </location>
</feature>
<feature type="sequence conflict" description="In Ref. 1; AAF28862." evidence="4" ref="1">
    <original>S</original>
    <variation>R</variation>
    <location>
        <position position="163"/>
    </location>
</feature>
<comment type="function">
    <text evidence="1">Involved in the inactivation of MAP kinases. Dephosphorylates ERK, JNK and p38 MAP-kinases. Plays a negative role in TCR signaling by dephosphorylating MAP3K7 adapter TAB1 leading to its inactivation.</text>
</comment>
<comment type="catalytic activity">
    <reaction evidence="3">
        <text>O-phospho-L-tyrosyl-[protein] + H2O = L-tyrosyl-[protein] + phosphate</text>
        <dbReference type="Rhea" id="RHEA:10684"/>
        <dbReference type="Rhea" id="RHEA-COMP:10136"/>
        <dbReference type="Rhea" id="RHEA-COMP:20101"/>
        <dbReference type="ChEBI" id="CHEBI:15377"/>
        <dbReference type="ChEBI" id="CHEBI:43474"/>
        <dbReference type="ChEBI" id="CHEBI:46858"/>
        <dbReference type="ChEBI" id="CHEBI:61978"/>
        <dbReference type="EC" id="3.1.3.48"/>
    </reaction>
</comment>
<comment type="catalytic activity">
    <reaction>
        <text>O-phospho-L-seryl-[protein] + H2O = L-seryl-[protein] + phosphate</text>
        <dbReference type="Rhea" id="RHEA:20629"/>
        <dbReference type="Rhea" id="RHEA-COMP:9863"/>
        <dbReference type="Rhea" id="RHEA-COMP:11604"/>
        <dbReference type="ChEBI" id="CHEBI:15377"/>
        <dbReference type="ChEBI" id="CHEBI:29999"/>
        <dbReference type="ChEBI" id="CHEBI:43474"/>
        <dbReference type="ChEBI" id="CHEBI:83421"/>
        <dbReference type="EC" id="3.1.3.16"/>
    </reaction>
</comment>
<comment type="catalytic activity">
    <reaction>
        <text>O-phospho-L-threonyl-[protein] + H2O = L-threonyl-[protein] + phosphate</text>
        <dbReference type="Rhea" id="RHEA:47004"/>
        <dbReference type="Rhea" id="RHEA-COMP:11060"/>
        <dbReference type="Rhea" id="RHEA-COMP:11605"/>
        <dbReference type="ChEBI" id="CHEBI:15377"/>
        <dbReference type="ChEBI" id="CHEBI:30013"/>
        <dbReference type="ChEBI" id="CHEBI:43474"/>
        <dbReference type="ChEBI" id="CHEBI:61977"/>
        <dbReference type="EC" id="3.1.3.16"/>
    </reaction>
</comment>
<comment type="similarity">
    <text evidence="4">Belongs to the protein-tyrosine phosphatase family. Non-receptor class dual specificity subfamily.</text>
</comment>
<proteinExistence type="evidence at transcript level"/>
<dbReference type="EC" id="3.1.3.16"/>
<dbReference type="EC" id="3.1.3.48"/>
<dbReference type="EMBL" id="AF120113">
    <property type="protein sequence ID" value="AAF28862.1"/>
    <property type="molecule type" value="mRNA"/>
</dbReference>
<dbReference type="EMBL" id="AK009744">
    <property type="protein sequence ID" value="BAB26474.1"/>
    <property type="molecule type" value="mRNA"/>
</dbReference>
<dbReference type="EMBL" id="BC002130">
    <property type="protein sequence ID" value="AAH02130.1"/>
    <property type="molecule type" value="mRNA"/>
</dbReference>
<dbReference type="CCDS" id="CCDS25182.1"/>
<dbReference type="RefSeq" id="NP_001395670.1">
    <property type="nucleotide sequence ID" value="NM_001408741.1"/>
</dbReference>
<dbReference type="RefSeq" id="NP_001395671.1">
    <property type="nucleotide sequence ID" value="NM_001408742.1"/>
</dbReference>
<dbReference type="RefSeq" id="NP_001395672.1">
    <property type="nucleotide sequence ID" value="NM_001408743.1"/>
</dbReference>
<dbReference type="RefSeq" id="NP_001395673.1">
    <property type="nucleotide sequence ID" value="NM_001408744.1"/>
</dbReference>
<dbReference type="RefSeq" id="NP_001395674.1">
    <property type="nucleotide sequence ID" value="NM_001408745.1"/>
</dbReference>
<dbReference type="RefSeq" id="NP_001395675.1">
    <property type="nucleotide sequence ID" value="NM_001408746.1"/>
</dbReference>
<dbReference type="RefSeq" id="NP_062793.2">
    <property type="nucleotide sequence ID" value="NM_019819.3"/>
</dbReference>
<dbReference type="RefSeq" id="XP_006533859.1">
    <property type="nucleotide sequence ID" value="XM_006533796.3"/>
</dbReference>
<dbReference type="RefSeq" id="XP_006533860.1">
    <property type="nucleotide sequence ID" value="XM_006533797.3"/>
</dbReference>
<dbReference type="RefSeq" id="XP_006533861.1">
    <property type="nucleotide sequence ID" value="XM_006533798.3"/>
</dbReference>
<dbReference type="RefSeq" id="XP_006533862.1">
    <property type="nucleotide sequence ID" value="XM_006533799.3"/>
</dbReference>
<dbReference type="RefSeq" id="XP_036012759.1">
    <property type="nucleotide sequence ID" value="XM_036156866.1"/>
</dbReference>
<dbReference type="SMR" id="Q9JLY7"/>
<dbReference type="BioGRID" id="207957">
    <property type="interactions" value="29"/>
</dbReference>
<dbReference type="FunCoup" id="Q9JLY7">
    <property type="interactions" value="1419"/>
</dbReference>
<dbReference type="STRING" id="10090.ENSMUSP00000018792"/>
<dbReference type="iPTMnet" id="Q9JLY7"/>
<dbReference type="PhosphoSitePlus" id="Q9JLY7"/>
<dbReference type="PaxDb" id="10090-ENSMUSP00000098271"/>
<dbReference type="ProteomicsDB" id="275410"/>
<dbReference type="Pumba" id="Q9JLY7"/>
<dbReference type="Antibodypedia" id="73139">
    <property type="antibodies" value="340 antibodies from 33 providers"/>
</dbReference>
<dbReference type="DNASU" id="56405"/>
<dbReference type="Ensembl" id="ENSMUST00000018792.12">
    <property type="protein sequence ID" value="ENSMUSP00000018792.6"/>
    <property type="gene ID" value="ENSMUSG00000018648.16"/>
</dbReference>
<dbReference type="Ensembl" id="ENSMUST00000100705.11">
    <property type="protein sequence ID" value="ENSMUSP00000098271.5"/>
    <property type="gene ID" value="ENSMUSG00000018648.16"/>
</dbReference>
<dbReference type="Ensembl" id="ENSMUST00000108101.8">
    <property type="protein sequence ID" value="ENSMUSP00000103736.2"/>
    <property type="gene ID" value="ENSMUSG00000018648.16"/>
</dbReference>
<dbReference type="Ensembl" id="ENSMUST00000164891.8">
    <property type="protein sequence ID" value="ENSMUSP00000130624.2"/>
    <property type="gene ID" value="ENSMUSG00000018648.16"/>
</dbReference>
<dbReference type="GeneID" id="56405"/>
<dbReference type="KEGG" id="mmu:56405"/>
<dbReference type="UCSC" id="uc007kqc.1">
    <property type="organism name" value="mouse"/>
</dbReference>
<dbReference type="AGR" id="MGI:1927168"/>
<dbReference type="CTD" id="11072"/>
<dbReference type="MGI" id="MGI:1927168">
    <property type="gene designation" value="Dusp14"/>
</dbReference>
<dbReference type="VEuPathDB" id="HostDB:ENSMUSG00000018648"/>
<dbReference type="eggNOG" id="KOG1718">
    <property type="taxonomic scope" value="Eukaryota"/>
</dbReference>
<dbReference type="GeneTree" id="ENSGT00940000160675"/>
<dbReference type="HOGENOM" id="CLU_027074_3_2_1"/>
<dbReference type="InParanoid" id="Q9JLY7"/>
<dbReference type="OMA" id="VYICGAH"/>
<dbReference type="OrthoDB" id="285418at2759"/>
<dbReference type="PhylomeDB" id="Q9JLY7"/>
<dbReference type="TreeFam" id="TF316009"/>
<dbReference type="BioGRID-ORCS" id="56405">
    <property type="hits" value="3 hits in 79 CRISPR screens"/>
</dbReference>
<dbReference type="ChiTaRS" id="Dusp14">
    <property type="organism name" value="mouse"/>
</dbReference>
<dbReference type="PRO" id="PR:Q9JLY7"/>
<dbReference type="Proteomes" id="UP000000589">
    <property type="component" value="Chromosome 11"/>
</dbReference>
<dbReference type="RNAct" id="Q9JLY7">
    <property type="molecule type" value="protein"/>
</dbReference>
<dbReference type="Bgee" id="ENSMUSG00000018648">
    <property type="expression patterns" value="Expressed in animal zygote and 208 other cell types or tissues"/>
</dbReference>
<dbReference type="ExpressionAtlas" id="Q9JLY7">
    <property type="expression patterns" value="baseline and differential"/>
</dbReference>
<dbReference type="GO" id="GO:0005737">
    <property type="term" value="C:cytoplasm"/>
    <property type="evidence" value="ECO:0000250"/>
    <property type="project" value="MGI"/>
</dbReference>
<dbReference type="GO" id="GO:0005634">
    <property type="term" value="C:nucleus"/>
    <property type="evidence" value="ECO:0000250"/>
    <property type="project" value="MGI"/>
</dbReference>
<dbReference type="GO" id="GO:0017017">
    <property type="term" value="F:MAP kinase tyrosine/serine/threonine phosphatase activity"/>
    <property type="evidence" value="ECO:0007669"/>
    <property type="project" value="InterPro"/>
</dbReference>
<dbReference type="GO" id="GO:0004722">
    <property type="term" value="F:protein serine/threonine phosphatase activity"/>
    <property type="evidence" value="ECO:0007669"/>
    <property type="project" value="UniProtKB-EC"/>
</dbReference>
<dbReference type="GO" id="GO:0004725">
    <property type="term" value="F:protein tyrosine phosphatase activity"/>
    <property type="evidence" value="ECO:0007669"/>
    <property type="project" value="UniProtKB-EC"/>
</dbReference>
<dbReference type="CDD" id="cd14572">
    <property type="entry name" value="DUSP14"/>
    <property type="match status" value="1"/>
</dbReference>
<dbReference type="FunFam" id="3.90.190.10:FF:000049">
    <property type="entry name" value="Dual specificity protein phosphatase 14"/>
    <property type="match status" value="1"/>
</dbReference>
<dbReference type="Gene3D" id="3.90.190.10">
    <property type="entry name" value="Protein tyrosine phosphatase superfamily"/>
    <property type="match status" value="1"/>
</dbReference>
<dbReference type="InterPro" id="IPR020420">
    <property type="entry name" value="Atypical_DUSP_subfamB"/>
</dbReference>
<dbReference type="InterPro" id="IPR000340">
    <property type="entry name" value="Dual-sp_phosphatase_cat-dom"/>
</dbReference>
<dbReference type="InterPro" id="IPR052103">
    <property type="entry name" value="Dual_spec_Phospatases"/>
</dbReference>
<dbReference type="InterPro" id="IPR029021">
    <property type="entry name" value="Prot-tyrosine_phosphatase-like"/>
</dbReference>
<dbReference type="InterPro" id="IPR016130">
    <property type="entry name" value="Tyr_Pase_AS"/>
</dbReference>
<dbReference type="InterPro" id="IPR000387">
    <property type="entry name" value="Tyr_Pase_dom"/>
</dbReference>
<dbReference type="InterPro" id="IPR020422">
    <property type="entry name" value="TYR_PHOSPHATASE_DUAL_dom"/>
</dbReference>
<dbReference type="PANTHER" id="PTHR45961:SF5">
    <property type="entry name" value="DUAL SPECIFICITY PROTEIN PHOSPHATASE 14"/>
    <property type="match status" value="1"/>
</dbReference>
<dbReference type="PANTHER" id="PTHR45961">
    <property type="entry name" value="IP21249P"/>
    <property type="match status" value="1"/>
</dbReference>
<dbReference type="Pfam" id="PF00782">
    <property type="entry name" value="DSPc"/>
    <property type="match status" value="1"/>
</dbReference>
<dbReference type="PRINTS" id="PR01908">
    <property type="entry name" value="ADSPHPHTASE"/>
</dbReference>
<dbReference type="PRINTS" id="PR01910">
    <property type="entry name" value="ADSPHPHTASEB"/>
</dbReference>
<dbReference type="SMART" id="SM00195">
    <property type="entry name" value="DSPc"/>
    <property type="match status" value="1"/>
</dbReference>
<dbReference type="SUPFAM" id="SSF52799">
    <property type="entry name" value="(Phosphotyrosine protein) phosphatases II"/>
    <property type="match status" value="1"/>
</dbReference>
<dbReference type="PROSITE" id="PS00383">
    <property type="entry name" value="TYR_PHOSPHATASE_1"/>
    <property type="match status" value="1"/>
</dbReference>
<dbReference type="PROSITE" id="PS50056">
    <property type="entry name" value="TYR_PHOSPHATASE_2"/>
    <property type="match status" value="1"/>
</dbReference>
<dbReference type="PROSITE" id="PS50054">
    <property type="entry name" value="TYR_PHOSPHATASE_DUAL"/>
    <property type="match status" value="1"/>
</dbReference>
<name>DUS14_MOUSE</name>
<sequence length="198" mass="22311">MSSRGHSTLPRTLMAPRMISEGDIGGIAQITSSLFLGRASVASNWHLLQARGITCVINATIEIPNFNWPQFEYVKVPLADIPHAPIRLYFDTVADKIHSVSKKHGATLVHCAAGVSRSATLCIAYLMKFHNLCLLEAYNWVKARRPVIRPNLGFWRQLIDYESQLFGKSSVKMVQTPYGIIPDVYEKESRHLMPYWGI</sequence>